<gene>
    <name evidence="1" type="primary">mnmE</name>
    <name evidence="1" type="synonym">trmE</name>
    <name type="ordered locus">BMA3395</name>
</gene>
<feature type="chain" id="PRO_0000345740" description="tRNA modification GTPase MnmE">
    <location>
        <begin position="1"/>
        <end position="467"/>
    </location>
</feature>
<feature type="domain" description="TrmE-type G">
    <location>
        <begin position="226"/>
        <end position="389"/>
    </location>
</feature>
<feature type="binding site" evidence="1">
    <location>
        <position position="25"/>
    </location>
    <ligand>
        <name>(6S)-5-formyl-5,6,7,8-tetrahydrofolate</name>
        <dbReference type="ChEBI" id="CHEBI:57457"/>
    </ligand>
</feature>
<feature type="binding site" evidence="1">
    <location>
        <position position="87"/>
    </location>
    <ligand>
        <name>(6S)-5-formyl-5,6,7,8-tetrahydrofolate</name>
        <dbReference type="ChEBI" id="CHEBI:57457"/>
    </ligand>
</feature>
<feature type="binding site" evidence="1">
    <location>
        <position position="130"/>
    </location>
    <ligand>
        <name>(6S)-5-formyl-5,6,7,8-tetrahydrofolate</name>
        <dbReference type="ChEBI" id="CHEBI:57457"/>
    </ligand>
</feature>
<feature type="binding site" evidence="1">
    <location>
        <begin position="236"/>
        <end position="241"/>
    </location>
    <ligand>
        <name>GTP</name>
        <dbReference type="ChEBI" id="CHEBI:37565"/>
    </ligand>
</feature>
<feature type="binding site" evidence="1">
    <location>
        <position position="236"/>
    </location>
    <ligand>
        <name>K(+)</name>
        <dbReference type="ChEBI" id="CHEBI:29103"/>
    </ligand>
</feature>
<feature type="binding site" evidence="1">
    <location>
        <position position="240"/>
    </location>
    <ligand>
        <name>Mg(2+)</name>
        <dbReference type="ChEBI" id="CHEBI:18420"/>
    </ligand>
</feature>
<feature type="binding site" evidence="1">
    <location>
        <begin position="255"/>
        <end position="261"/>
    </location>
    <ligand>
        <name>GTP</name>
        <dbReference type="ChEBI" id="CHEBI:37565"/>
    </ligand>
</feature>
<feature type="binding site" evidence="1">
    <location>
        <position position="255"/>
    </location>
    <ligand>
        <name>K(+)</name>
        <dbReference type="ChEBI" id="CHEBI:29103"/>
    </ligand>
</feature>
<feature type="binding site" evidence="1">
    <location>
        <position position="257"/>
    </location>
    <ligand>
        <name>K(+)</name>
        <dbReference type="ChEBI" id="CHEBI:29103"/>
    </ligand>
</feature>
<feature type="binding site" evidence="1">
    <location>
        <position position="260"/>
    </location>
    <ligand>
        <name>K(+)</name>
        <dbReference type="ChEBI" id="CHEBI:29103"/>
    </ligand>
</feature>
<feature type="binding site" evidence="1">
    <location>
        <position position="261"/>
    </location>
    <ligand>
        <name>Mg(2+)</name>
        <dbReference type="ChEBI" id="CHEBI:18420"/>
    </ligand>
</feature>
<feature type="binding site" evidence="1">
    <location>
        <begin position="280"/>
        <end position="283"/>
    </location>
    <ligand>
        <name>GTP</name>
        <dbReference type="ChEBI" id="CHEBI:37565"/>
    </ligand>
</feature>
<feature type="binding site" evidence="1">
    <location>
        <position position="467"/>
    </location>
    <ligand>
        <name>(6S)-5-formyl-5,6,7,8-tetrahydrofolate</name>
        <dbReference type="ChEBI" id="CHEBI:57457"/>
    </ligand>
</feature>
<reference key="1">
    <citation type="journal article" date="2004" name="Proc. Natl. Acad. Sci. U.S.A.">
        <title>Structural flexibility in the Burkholderia mallei genome.</title>
        <authorList>
            <person name="Nierman W.C."/>
            <person name="DeShazer D."/>
            <person name="Kim H.S."/>
            <person name="Tettelin H."/>
            <person name="Nelson K.E."/>
            <person name="Feldblyum T.V."/>
            <person name="Ulrich R.L."/>
            <person name="Ronning C.M."/>
            <person name="Brinkac L.M."/>
            <person name="Daugherty S.C."/>
            <person name="Davidsen T.D."/>
            <person name="DeBoy R.T."/>
            <person name="Dimitrov G."/>
            <person name="Dodson R.J."/>
            <person name="Durkin A.S."/>
            <person name="Gwinn M.L."/>
            <person name="Haft D.H."/>
            <person name="Khouri H.M."/>
            <person name="Kolonay J.F."/>
            <person name="Madupu R."/>
            <person name="Mohammoud Y."/>
            <person name="Nelson W.C."/>
            <person name="Radune D."/>
            <person name="Romero C.M."/>
            <person name="Sarria S."/>
            <person name="Selengut J."/>
            <person name="Shamblin C."/>
            <person name="Sullivan S.A."/>
            <person name="White O."/>
            <person name="Yu Y."/>
            <person name="Zafar N."/>
            <person name="Zhou L."/>
            <person name="Fraser C.M."/>
        </authorList>
    </citation>
    <scope>NUCLEOTIDE SEQUENCE [LARGE SCALE GENOMIC DNA]</scope>
    <source>
        <strain>ATCC 23344</strain>
    </source>
</reference>
<sequence length="467" mass="49453">MLATDSDPIVAIATASGRGGIGVVRLSLGRAGEAAARALSDALCGARLMPRHASYVPFLDGAGEPLDRGIALYFPAPHSYTGEHVIELQGHGGPIVLQLLLQRCLDAGRAHGLRLAEPGEFTRRAFLNDKLDLAQAEAVADLIEASTEAAARSAGRSLDGAFSRDIHALVDDVIALRMLVEATLDFPEEEIDFLEAADARGKLAHIRERLAHVLGDARQGALLREGLSVVLAGQPNVGKSSLLNALAGAELAIVTPIAGTTRDKVAQTIQIEGIPLHIIDTAGLRETEDEVEKIGIARTWGEIERADVVLHLLDARSGLGPGDEAIAARFPDGVPVVRVLNKTDLTGAPASVTRTGGGAARADVCEVRLSAKRGDGIDLLRGELLRIAGWQAGAESVYLARERHLIALRAAQAHLARAAEHAEQNAQALDLFAEELRLAQERLNSITGEFTSDDLLGVIFSRFCIGK</sequence>
<accession>Q62EM6</accession>
<keyword id="KW-0963">Cytoplasm</keyword>
<keyword id="KW-0342">GTP-binding</keyword>
<keyword id="KW-0378">Hydrolase</keyword>
<keyword id="KW-0460">Magnesium</keyword>
<keyword id="KW-0479">Metal-binding</keyword>
<keyword id="KW-0547">Nucleotide-binding</keyword>
<keyword id="KW-0630">Potassium</keyword>
<keyword id="KW-1185">Reference proteome</keyword>
<keyword id="KW-0819">tRNA processing</keyword>
<proteinExistence type="inferred from homology"/>
<name>MNME_BURMA</name>
<organism>
    <name type="scientific">Burkholderia mallei (strain ATCC 23344)</name>
    <dbReference type="NCBI Taxonomy" id="243160"/>
    <lineage>
        <taxon>Bacteria</taxon>
        <taxon>Pseudomonadati</taxon>
        <taxon>Pseudomonadota</taxon>
        <taxon>Betaproteobacteria</taxon>
        <taxon>Burkholderiales</taxon>
        <taxon>Burkholderiaceae</taxon>
        <taxon>Burkholderia</taxon>
        <taxon>pseudomallei group</taxon>
    </lineage>
</organism>
<dbReference type="EC" id="3.6.-.-" evidence="1"/>
<dbReference type="EMBL" id="CP000010">
    <property type="protein sequence ID" value="AAU48912.1"/>
    <property type="molecule type" value="Genomic_DNA"/>
</dbReference>
<dbReference type="RefSeq" id="WP_004524586.1">
    <property type="nucleotide sequence ID" value="NC_006348.1"/>
</dbReference>
<dbReference type="RefSeq" id="YP_104852.1">
    <property type="nucleotide sequence ID" value="NC_006348.1"/>
</dbReference>
<dbReference type="SMR" id="Q62EM6"/>
<dbReference type="GeneID" id="93058592"/>
<dbReference type="KEGG" id="bma:BMA3395"/>
<dbReference type="PATRIC" id="fig|243160.12.peg.3485"/>
<dbReference type="eggNOG" id="COG0486">
    <property type="taxonomic scope" value="Bacteria"/>
</dbReference>
<dbReference type="HOGENOM" id="CLU_019624_4_1_4"/>
<dbReference type="Proteomes" id="UP000006693">
    <property type="component" value="Chromosome 1"/>
</dbReference>
<dbReference type="GO" id="GO:0005829">
    <property type="term" value="C:cytosol"/>
    <property type="evidence" value="ECO:0007669"/>
    <property type="project" value="TreeGrafter"/>
</dbReference>
<dbReference type="GO" id="GO:0005525">
    <property type="term" value="F:GTP binding"/>
    <property type="evidence" value="ECO:0007669"/>
    <property type="project" value="UniProtKB-UniRule"/>
</dbReference>
<dbReference type="GO" id="GO:0003924">
    <property type="term" value="F:GTPase activity"/>
    <property type="evidence" value="ECO:0007669"/>
    <property type="project" value="UniProtKB-UniRule"/>
</dbReference>
<dbReference type="GO" id="GO:0046872">
    <property type="term" value="F:metal ion binding"/>
    <property type="evidence" value="ECO:0007669"/>
    <property type="project" value="UniProtKB-KW"/>
</dbReference>
<dbReference type="GO" id="GO:0030488">
    <property type="term" value="P:tRNA methylation"/>
    <property type="evidence" value="ECO:0007669"/>
    <property type="project" value="TreeGrafter"/>
</dbReference>
<dbReference type="GO" id="GO:0002098">
    <property type="term" value="P:tRNA wobble uridine modification"/>
    <property type="evidence" value="ECO:0007669"/>
    <property type="project" value="TreeGrafter"/>
</dbReference>
<dbReference type="CDD" id="cd04164">
    <property type="entry name" value="trmE"/>
    <property type="match status" value="1"/>
</dbReference>
<dbReference type="CDD" id="cd14858">
    <property type="entry name" value="TrmE_N"/>
    <property type="match status" value="1"/>
</dbReference>
<dbReference type="Gene3D" id="3.40.50.300">
    <property type="entry name" value="P-loop containing nucleotide triphosphate hydrolases"/>
    <property type="match status" value="1"/>
</dbReference>
<dbReference type="Gene3D" id="3.30.1360.120">
    <property type="entry name" value="Probable tRNA modification gtpase trme, domain 1"/>
    <property type="match status" value="1"/>
</dbReference>
<dbReference type="Gene3D" id="1.20.120.430">
    <property type="entry name" value="tRNA modification GTPase MnmE domain 2"/>
    <property type="match status" value="1"/>
</dbReference>
<dbReference type="HAMAP" id="MF_00379">
    <property type="entry name" value="GTPase_MnmE"/>
    <property type="match status" value="1"/>
</dbReference>
<dbReference type="InterPro" id="IPR031168">
    <property type="entry name" value="G_TrmE"/>
</dbReference>
<dbReference type="InterPro" id="IPR006073">
    <property type="entry name" value="GTP-bd"/>
</dbReference>
<dbReference type="InterPro" id="IPR018948">
    <property type="entry name" value="GTP-bd_TrmE_N"/>
</dbReference>
<dbReference type="InterPro" id="IPR004520">
    <property type="entry name" value="GTPase_MnmE"/>
</dbReference>
<dbReference type="InterPro" id="IPR027368">
    <property type="entry name" value="MnmE_dom2"/>
</dbReference>
<dbReference type="InterPro" id="IPR025867">
    <property type="entry name" value="MnmE_helical"/>
</dbReference>
<dbReference type="InterPro" id="IPR027417">
    <property type="entry name" value="P-loop_NTPase"/>
</dbReference>
<dbReference type="InterPro" id="IPR005225">
    <property type="entry name" value="Small_GTP-bd"/>
</dbReference>
<dbReference type="InterPro" id="IPR027266">
    <property type="entry name" value="TrmE/GcvT_dom1"/>
</dbReference>
<dbReference type="NCBIfam" id="TIGR00450">
    <property type="entry name" value="mnmE_trmE_thdF"/>
    <property type="match status" value="1"/>
</dbReference>
<dbReference type="NCBIfam" id="NF003661">
    <property type="entry name" value="PRK05291.1-3"/>
    <property type="match status" value="1"/>
</dbReference>
<dbReference type="NCBIfam" id="TIGR00231">
    <property type="entry name" value="small_GTP"/>
    <property type="match status" value="1"/>
</dbReference>
<dbReference type="PANTHER" id="PTHR42714">
    <property type="entry name" value="TRNA MODIFICATION GTPASE GTPBP3"/>
    <property type="match status" value="1"/>
</dbReference>
<dbReference type="PANTHER" id="PTHR42714:SF2">
    <property type="entry name" value="TRNA MODIFICATION GTPASE GTPBP3, MITOCHONDRIAL"/>
    <property type="match status" value="1"/>
</dbReference>
<dbReference type="Pfam" id="PF01926">
    <property type="entry name" value="MMR_HSR1"/>
    <property type="match status" value="1"/>
</dbReference>
<dbReference type="Pfam" id="PF12631">
    <property type="entry name" value="MnmE_helical"/>
    <property type="match status" value="1"/>
</dbReference>
<dbReference type="Pfam" id="PF10396">
    <property type="entry name" value="TrmE_N"/>
    <property type="match status" value="1"/>
</dbReference>
<dbReference type="PRINTS" id="PR00326">
    <property type="entry name" value="GTP1OBG"/>
</dbReference>
<dbReference type="SUPFAM" id="SSF52540">
    <property type="entry name" value="P-loop containing nucleoside triphosphate hydrolases"/>
    <property type="match status" value="1"/>
</dbReference>
<dbReference type="SUPFAM" id="SSF116878">
    <property type="entry name" value="TrmE connector domain"/>
    <property type="match status" value="1"/>
</dbReference>
<dbReference type="PROSITE" id="PS51709">
    <property type="entry name" value="G_TRME"/>
    <property type="match status" value="1"/>
</dbReference>
<protein>
    <recommendedName>
        <fullName evidence="1">tRNA modification GTPase MnmE</fullName>
        <ecNumber evidence="1">3.6.-.-</ecNumber>
    </recommendedName>
</protein>
<comment type="function">
    <text evidence="1">Exhibits a very high intrinsic GTPase hydrolysis rate. Involved in the addition of a carboxymethylaminomethyl (cmnm) group at the wobble position (U34) of certain tRNAs, forming tRNA-cmnm(5)s(2)U34.</text>
</comment>
<comment type="cofactor">
    <cofactor evidence="1">
        <name>K(+)</name>
        <dbReference type="ChEBI" id="CHEBI:29103"/>
    </cofactor>
    <text evidence="1">Binds 1 potassium ion per subunit.</text>
</comment>
<comment type="subunit">
    <text evidence="1">Homodimer. Heterotetramer of two MnmE and two MnmG subunits.</text>
</comment>
<comment type="subcellular location">
    <subcellularLocation>
        <location evidence="1">Cytoplasm</location>
    </subcellularLocation>
</comment>
<comment type="similarity">
    <text evidence="1">Belongs to the TRAFAC class TrmE-Era-EngA-EngB-Septin-like GTPase superfamily. TrmE GTPase family.</text>
</comment>
<evidence type="ECO:0000255" key="1">
    <source>
        <dbReference type="HAMAP-Rule" id="MF_00379"/>
    </source>
</evidence>